<proteinExistence type="inferred from homology"/>
<name>SYL_PSEP7</name>
<comment type="catalytic activity">
    <reaction evidence="1">
        <text>tRNA(Leu) + L-leucine + ATP = L-leucyl-tRNA(Leu) + AMP + diphosphate</text>
        <dbReference type="Rhea" id="RHEA:11688"/>
        <dbReference type="Rhea" id="RHEA-COMP:9613"/>
        <dbReference type="Rhea" id="RHEA-COMP:9622"/>
        <dbReference type="ChEBI" id="CHEBI:30616"/>
        <dbReference type="ChEBI" id="CHEBI:33019"/>
        <dbReference type="ChEBI" id="CHEBI:57427"/>
        <dbReference type="ChEBI" id="CHEBI:78442"/>
        <dbReference type="ChEBI" id="CHEBI:78494"/>
        <dbReference type="ChEBI" id="CHEBI:456215"/>
        <dbReference type="EC" id="6.1.1.4"/>
    </reaction>
</comment>
<comment type="subcellular location">
    <subcellularLocation>
        <location evidence="1">Cytoplasm</location>
    </subcellularLocation>
</comment>
<comment type="similarity">
    <text evidence="1">Belongs to the class-I aminoacyl-tRNA synthetase family.</text>
</comment>
<sequence>MHEQYQPLEIETQAQNYWKEHQSFLVRELPDKEKFYCLSMFPYPSGKLHMGHVRNYTIGDVISRYHRMQGRNVLQPMGWDAFGMPAENAAMKNNVAPAAWTYDNIAYMKSQLDSLGLAIDWTREVTTCKPDYYRWEQWLFTRLFEKGVIYRKNGTVNWDPVDQTVLANEQVIDGRGWRSGALIEKREIPMYYFKITAYAEELLESLDNLPGWPEQVKTMQRNWIGKSRGMEIAFPYDQASIGHAGQLKVFTTRPDTLMGATYVAVAAEHPLATQAAQNDPQLQAFIDECKRGGVAEADIATQEKKGLATSLFVEHPLTGDKLPVWVANYVLMNYGEGAVMAVPGHDERDFEFANKYGLPIRQVIARVEGENDFEPTVWKEWYGAKDESVRTVNSGKYDDLGYQAAFDAIGADLEAKGLGQARTQFRLRDWGISRQRYWGCPIPIIHCDACGDVPVPAEQLPVVLPEDVVPDGAGSPLAKMPEFYECSCPKCGQPAKRETDTMDTFVESSWYFARYACPQFEGGMLDKKAADYWLPVDQYIGGIEHAILHLLYARFFHKLMRDEGLVGSDEPFRNLLTQGMVVADTYYRTTANGGKDWFNPADVEVERDAKAKVVGARLKSDGQPVEIGGTEKMSKSKNNGVDPQSMIDQYGADTCRLFMMFASPPDMSLEWSDAGVEGANRFLRRVWRLAHAHVSAGLPGALDGASLSDAQKQVRRAIHLAIRQASQDVGQHHKFNTAIAAVMTLMNVLEKAPSQDAQDRALLQEGLETVVLLLAPITPHICHVLWEQLGHAEAVIDARWPVVDESALVQDTLQLVVQVNGKLRGHIDVAASASREDVEAAARANENVLRFTEGLSIRKVIVVPGKLVNIVAN</sequence>
<protein>
    <recommendedName>
        <fullName evidence="1">Leucine--tRNA ligase</fullName>
        <ecNumber evidence="1">6.1.1.4</ecNumber>
    </recommendedName>
    <alternativeName>
        <fullName evidence="1">Leucyl-tRNA synthetase</fullName>
        <shortName evidence="1">LeuRS</shortName>
    </alternativeName>
</protein>
<feature type="chain" id="PRO_1000009397" description="Leucine--tRNA ligase">
    <location>
        <begin position="1"/>
        <end position="873"/>
    </location>
</feature>
<feature type="region of interest" description="Disordered" evidence="2">
    <location>
        <begin position="624"/>
        <end position="643"/>
    </location>
</feature>
<feature type="short sequence motif" description="'HIGH' region">
    <location>
        <begin position="42"/>
        <end position="52"/>
    </location>
</feature>
<feature type="short sequence motif" description="'KMSKS' region">
    <location>
        <begin position="632"/>
        <end position="636"/>
    </location>
</feature>
<feature type="binding site" evidence="1">
    <location>
        <position position="635"/>
    </location>
    <ligand>
        <name>ATP</name>
        <dbReference type="ChEBI" id="CHEBI:30616"/>
    </ligand>
</feature>
<dbReference type="EC" id="6.1.1.4" evidence="1"/>
<dbReference type="EMBL" id="CP000744">
    <property type="protein sequence ID" value="ABR80652.1"/>
    <property type="molecule type" value="Genomic_DNA"/>
</dbReference>
<dbReference type="RefSeq" id="WP_012074434.1">
    <property type="nucleotide sequence ID" value="NC_009656.1"/>
</dbReference>
<dbReference type="SMR" id="A6V0C2"/>
<dbReference type="KEGG" id="pap:PSPA7_1121"/>
<dbReference type="HOGENOM" id="CLU_004427_0_0_6"/>
<dbReference type="Proteomes" id="UP000001582">
    <property type="component" value="Chromosome"/>
</dbReference>
<dbReference type="GO" id="GO:0005829">
    <property type="term" value="C:cytosol"/>
    <property type="evidence" value="ECO:0007669"/>
    <property type="project" value="TreeGrafter"/>
</dbReference>
<dbReference type="GO" id="GO:0002161">
    <property type="term" value="F:aminoacyl-tRNA deacylase activity"/>
    <property type="evidence" value="ECO:0007669"/>
    <property type="project" value="InterPro"/>
</dbReference>
<dbReference type="GO" id="GO:0005524">
    <property type="term" value="F:ATP binding"/>
    <property type="evidence" value="ECO:0007669"/>
    <property type="project" value="UniProtKB-UniRule"/>
</dbReference>
<dbReference type="GO" id="GO:0004823">
    <property type="term" value="F:leucine-tRNA ligase activity"/>
    <property type="evidence" value="ECO:0007669"/>
    <property type="project" value="UniProtKB-UniRule"/>
</dbReference>
<dbReference type="GO" id="GO:0006429">
    <property type="term" value="P:leucyl-tRNA aminoacylation"/>
    <property type="evidence" value="ECO:0007669"/>
    <property type="project" value="UniProtKB-UniRule"/>
</dbReference>
<dbReference type="CDD" id="cd07958">
    <property type="entry name" value="Anticodon_Ia_Leu_BEm"/>
    <property type="match status" value="1"/>
</dbReference>
<dbReference type="CDD" id="cd00812">
    <property type="entry name" value="LeuRS_core"/>
    <property type="match status" value="1"/>
</dbReference>
<dbReference type="FunFam" id="1.10.730.10:FF:000003">
    <property type="entry name" value="Leucine--tRNA ligase"/>
    <property type="match status" value="1"/>
</dbReference>
<dbReference type="FunFam" id="2.20.28.290:FF:000001">
    <property type="entry name" value="Leucine--tRNA ligase"/>
    <property type="match status" value="1"/>
</dbReference>
<dbReference type="FunFam" id="3.10.20.590:FF:000001">
    <property type="entry name" value="Leucine--tRNA ligase"/>
    <property type="match status" value="1"/>
</dbReference>
<dbReference type="FunFam" id="3.40.50.620:FF:000003">
    <property type="entry name" value="Leucine--tRNA ligase"/>
    <property type="match status" value="1"/>
</dbReference>
<dbReference type="FunFam" id="3.40.50.620:FF:000124">
    <property type="entry name" value="Leucine--tRNA ligase"/>
    <property type="match status" value="1"/>
</dbReference>
<dbReference type="FunFam" id="3.90.740.10:FF:000012">
    <property type="entry name" value="Leucine--tRNA ligase"/>
    <property type="match status" value="1"/>
</dbReference>
<dbReference type="Gene3D" id="2.20.28.290">
    <property type="match status" value="1"/>
</dbReference>
<dbReference type="Gene3D" id="3.10.20.590">
    <property type="match status" value="1"/>
</dbReference>
<dbReference type="Gene3D" id="3.40.50.620">
    <property type="entry name" value="HUPs"/>
    <property type="match status" value="2"/>
</dbReference>
<dbReference type="Gene3D" id="1.10.730.10">
    <property type="entry name" value="Isoleucyl-tRNA Synthetase, Domain 1"/>
    <property type="match status" value="1"/>
</dbReference>
<dbReference type="Gene3D" id="3.90.740.10">
    <property type="entry name" value="Valyl/Leucyl/Isoleucyl-tRNA synthetase, editing domain"/>
    <property type="match status" value="1"/>
</dbReference>
<dbReference type="HAMAP" id="MF_00049_B">
    <property type="entry name" value="Leu_tRNA_synth_B"/>
    <property type="match status" value="1"/>
</dbReference>
<dbReference type="InterPro" id="IPR001412">
    <property type="entry name" value="aa-tRNA-synth_I_CS"/>
</dbReference>
<dbReference type="InterPro" id="IPR002300">
    <property type="entry name" value="aa-tRNA-synth_Ia"/>
</dbReference>
<dbReference type="InterPro" id="IPR002302">
    <property type="entry name" value="Leu-tRNA-ligase"/>
</dbReference>
<dbReference type="InterPro" id="IPR025709">
    <property type="entry name" value="Leu_tRNA-synth_edit"/>
</dbReference>
<dbReference type="InterPro" id="IPR013155">
    <property type="entry name" value="M/V/L/I-tRNA-synth_anticd-bd"/>
</dbReference>
<dbReference type="InterPro" id="IPR015413">
    <property type="entry name" value="Methionyl/Leucyl_tRNA_Synth"/>
</dbReference>
<dbReference type="InterPro" id="IPR014729">
    <property type="entry name" value="Rossmann-like_a/b/a_fold"/>
</dbReference>
<dbReference type="InterPro" id="IPR009080">
    <property type="entry name" value="tRNAsynth_Ia_anticodon-bd"/>
</dbReference>
<dbReference type="InterPro" id="IPR009008">
    <property type="entry name" value="Val/Leu/Ile-tRNA-synth_edit"/>
</dbReference>
<dbReference type="NCBIfam" id="TIGR00396">
    <property type="entry name" value="leuS_bact"/>
    <property type="match status" value="1"/>
</dbReference>
<dbReference type="PANTHER" id="PTHR43740:SF2">
    <property type="entry name" value="LEUCINE--TRNA LIGASE, MITOCHONDRIAL"/>
    <property type="match status" value="1"/>
</dbReference>
<dbReference type="PANTHER" id="PTHR43740">
    <property type="entry name" value="LEUCYL-TRNA SYNTHETASE"/>
    <property type="match status" value="1"/>
</dbReference>
<dbReference type="Pfam" id="PF08264">
    <property type="entry name" value="Anticodon_1"/>
    <property type="match status" value="1"/>
</dbReference>
<dbReference type="Pfam" id="PF00133">
    <property type="entry name" value="tRNA-synt_1"/>
    <property type="match status" value="2"/>
</dbReference>
<dbReference type="Pfam" id="PF13603">
    <property type="entry name" value="tRNA-synt_1_2"/>
    <property type="match status" value="1"/>
</dbReference>
<dbReference type="Pfam" id="PF09334">
    <property type="entry name" value="tRNA-synt_1g"/>
    <property type="match status" value="1"/>
</dbReference>
<dbReference type="PRINTS" id="PR00985">
    <property type="entry name" value="TRNASYNTHLEU"/>
</dbReference>
<dbReference type="SUPFAM" id="SSF47323">
    <property type="entry name" value="Anticodon-binding domain of a subclass of class I aminoacyl-tRNA synthetases"/>
    <property type="match status" value="1"/>
</dbReference>
<dbReference type="SUPFAM" id="SSF52374">
    <property type="entry name" value="Nucleotidylyl transferase"/>
    <property type="match status" value="1"/>
</dbReference>
<dbReference type="SUPFAM" id="SSF50677">
    <property type="entry name" value="ValRS/IleRS/LeuRS editing domain"/>
    <property type="match status" value="1"/>
</dbReference>
<dbReference type="PROSITE" id="PS00178">
    <property type="entry name" value="AA_TRNA_LIGASE_I"/>
    <property type="match status" value="1"/>
</dbReference>
<organism>
    <name type="scientific">Pseudomonas paraeruginosa (strain DSM 24068 / PA7)</name>
    <name type="common">Pseudomonas aeruginosa (strain PA7)</name>
    <dbReference type="NCBI Taxonomy" id="381754"/>
    <lineage>
        <taxon>Bacteria</taxon>
        <taxon>Pseudomonadati</taxon>
        <taxon>Pseudomonadota</taxon>
        <taxon>Gammaproteobacteria</taxon>
        <taxon>Pseudomonadales</taxon>
        <taxon>Pseudomonadaceae</taxon>
        <taxon>Pseudomonas</taxon>
        <taxon>Pseudomonas paraeruginosa</taxon>
    </lineage>
</organism>
<reference key="1">
    <citation type="submission" date="2007-06" db="EMBL/GenBank/DDBJ databases">
        <authorList>
            <person name="Dodson R.J."/>
            <person name="Harkins D."/>
            <person name="Paulsen I.T."/>
        </authorList>
    </citation>
    <scope>NUCLEOTIDE SEQUENCE [LARGE SCALE GENOMIC DNA]</scope>
    <source>
        <strain>DSM 24068 / PA7</strain>
    </source>
</reference>
<accession>A6V0C2</accession>
<gene>
    <name evidence="1" type="primary">leuS</name>
    <name type="ordered locus">PSPA7_1121</name>
</gene>
<evidence type="ECO:0000255" key="1">
    <source>
        <dbReference type="HAMAP-Rule" id="MF_00049"/>
    </source>
</evidence>
<evidence type="ECO:0000256" key="2">
    <source>
        <dbReference type="SAM" id="MobiDB-lite"/>
    </source>
</evidence>
<keyword id="KW-0030">Aminoacyl-tRNA synthetase</keyword>
<keyword id="KW-0067">ATP-binding</keyword>
<keyword id="KW-0963">Cytoplasm</keyword>
<keyword id="KW-0436">Ligase</keyword>
<keyword id="KW-0547">Nucleotide-binding</keyword>
<keyword id="KW-0648">Protein biosynthesis</keyword>